<protein>
    <recommendedName>
        <fullName evidence="1">RNA pyrophosphohydrolase</fullName>
        <ecNumber evidence="1">3.6.1.-</ecNumber>
    </recommendedName>
    <alternativeName>
        <fullName evidence="1">(Di)nucleoside polyphosphate hydrolase</fullName>
    </alternativeName>
</protein>
<comment type="function">
    <text evidence="1">Accelerates the degradation of transcripts by removing pyrophosphate from the 5'-end of triphosphorylated RNA, leading to a more labile monophosphorylated state that can stimulate subsequent ribonuclease cleavage.</text>
</comment>
<comment type="cofactor">
    <cofactor evidence="1">
        <name>a divalent metal cation</name>
        <dbReference type="ChEBI" id="CHEBI:60240"/>
    </cofactor>
</comment>
<comment type="similarity">
    <text evidence="1">Belongs to the Nudix hydrolase family. RppH subfamily.</text>
</comment>
<gene>
    <name evidence="1" type="primary">rppH</name>
    <name evidence="1" type="synonym">nudH</name>
    <name type="ordered locus">Vapar_4213</name>
</gene>
<proteinExistence type="inferred from homology"/>
<feature type="chain" id="PRO_1000204942" description="RNA pyrophosphohydrolase">
    <location>
        <begin position="1"/>
        <end position="223"/>
    </location>
</feature>
<feature type="domain" description="Nudix hydrolase" evidence="1">
    <location>
        <begin position="6"/>
        <end position="149"/>
    </location>
</feature>
<feature type="region of interest" description="Disordered" evidence="2">
    <location>
        <begin position="175"/>
        <end position="223"/>
    </location>
</feature>
<feature type="short sequence motif" description="Nudix box">
    <location>
        <begin position="38"/>
        <end position="59"/>
    </location>
</feature>
<feature type="compositionally biased region" description="Low complexity" evidence="2">
    <location>
        <begin position="180"/>
        <end position="193"/>
    </location>
</feature>
<accession>C5CXX0</accession>
<organism>
    <name type="scientific">Variovorax paradoxus (strain S110)</name>
    <dbReference type="NCBI Taxonomy" id="543728"/>
    <lineage>
        <taxon>Bacteria</taxon>
        <taxon>Pseudomonadati</taxon>
        <taxon>Pseudomonadota</taxon>
        <taxon>Betaproteobacteria</taxon>
        <taxon>Burkholderiales</taxon>
        <taxon>Comamonadaceae</taxon>
        <taxon>Variovorax</taxon>
    </lineage>
</organism>
<dbReference type="EC" id="3.6.1.-" evidence="1"/>
<dbReference type="EMBL" id="CP001635">
    <property type="protein sequence ID" value="ACS20826.1"/>
    <property type="molecule type" value="Genomic_DNA"/>
</dbReference>
<dbReference type="SMR" id="C5CXX0"/>
<dbReference type="STRING" id="543728.Vapar_4213"/>
<dbReference type="KEGG" id="vap:Vapar_4213"/>
<dbReference type="eggNOG" id="COG0494">
    <property type="taxonomic scope" value="Bacteria"/>
</dbReference>
<dbReference type="HOGENOM" id="CLU_087195_1_1_4"/>
<dbReference type="OrthoDB" id="9816040at2"/>
<dbReference type="GO" id="GO:0046872">
    <property type="term" value="F:metal ion binding"/>
    <property type="evidence" value="ECO:0007669"/>
    <property type="project" value="UniProtKB-KW"/>
</dbReference>
<dbReference type="GO" id="GO:0016462">
    <property type="term" value="F:pyrophosphatase activity"/>
    <property type="evidence" value="ECO:0007669"/>
    <property type="project" value="UniProtKB-ARBA"/>
</dbReference>
<dbReference type="CDD" id="cd03671">
    <property type="entry name" value="NUDIX_Ap4A_hydrolase_plant_like"/>
    <property type="match status" value="1"/>
</dbReference>
<dbReference type="FunFam" id="3.90.79.10:FF:000001">
    <property type="entry name" value="RNA pyrophosphohydrolase"/>
    <property type="match status" value="1"/>
</dbReference>
<dbReference type="Gene3D" id="3.90.79.10">
    <property type="entry name" value="Nucleoside Triphosphate Pyrophosphohydrolase"/>
    <property type="match status" value="1"/>
</dbReference>
<dbReference type="HAMAP" id="MF_00298">
    <property type="entry name" value="Nudix_RppH"/>
    <property type="match status" value="1"/>
</dbReference>
<dbReference type="InterPro" id="IPR020476">
    <property type="entry name" value="Nudix_hydrolase"/>
</dbReference>
<dbReference type="InterPro" id="IPR015797">
    <property type="entry name" value="NUDIX_hydrolase-like_dom_sf"/>
</dbReference>
<dbReference type="InterPro" id="IPR020084">
    <property type="entry name" value="NUDIX_hydrolase_CS"/>
</dbReference>
<dbReference type="InterPro" id="IPR000086">
    <property type="entry name" value="NUDIX_hydrolase_dom"/>
</dbReference>
<dbReference type="InterPro" id="IPR022927">
    <property type="entry name" value="RppH"/>
</dbReference>
<dbReference type="NCBIfam" id="NF001935">
    <property type="entry name" value="PRK00714.1-2"/>
    <property type="match status" value="1"/>
</dbReference>
<dbReference type="NCBIfam" id="NF001937">
    <property type="entry name" value="PRK00714.1-4"/>
    <property type="match status" value="1"/>
</dbReference>
<dbReference type="NCBIfam" id="NF001938">
    <property type="entry name" value="PRK00714.1-5"/>
    <property type="match status" value="1"/>
</dbReference>
<dbReference type="PANTHER" id="PTHR43736">
    <property type="entry name" value="ADP-RIBOSE PYROPHOSPHATASE"/>
    <property type="match status" value="1"/>
</dbReference>
<dbReference type="PANTHER" id="PTHR43736:SF1">
    <property type="entry name" value="DIHYDRONEOPTERIN TRIPHOSPHATE DIPHOSPHATASE"/>
    <property type="match status" value="1"/>
</dbReference>
<dbReference type="Pfam" id="PF00293">
    <property type="entry name" value="NUDIX"/>
    <property type="match status" value="1"/>
</dbReference>
<dbReference type="PRINTS" id="PR00502">
    <property type="entry name" value="NUDIXFAMILY"/>
</dbReference>
<dbReference type="SUPFAM" id="SSF55811">
    <property type="entry name" value="Nudix"/>
    <property type="match status" value="1"/>
</dbReference>
<dbReference type="PROSITE" id="PS51462">
    <property type="entry name" value="NUDIX"/>
    <property type="match status" value="1"/>
</dbReference>
<dbReference type="PROSITE" id="PS00893">
    <property type="entry name" value="NUDIX_BOX"/>
    <property type="match status" value="1"/>
</dbReference>
<reference key="1">
    <citation type="journal article" date="2011" name="J. Bacteriol.">
        <title>Complete genome sequence of the metabolically versatile plant growth-promoting endophyte, Variovorax paradoxus S110.</title>
        <authorList>
            <person name="Han J.I."/>
            <person name="Choi H.K."/>
            <person name="Lee S.W."/>
            <person name="Orwin P.M."/>
            <person name="Kim J."/>
            <person name="Laroe S.L."/>
            <person name="Kim T.G."/>
            <person name="O'Neil J."/>
            <person name="Leadbetter J.R."/>
            <person name="Lee S.Y."/>
            <person name="Hur C.G."/>
            <person name="Spain J.C."/>
            <person name="Ovchinnikova G."/>
            <person name="Goodwin L."/>
            <person name="Han C."/>
        </authorList>
    </citation>
    <scope>NUCLEOTIDE SEQUENCE [LARGE SCALE GENOMIC DNA]</scope>
    <source>
        <strain>S110</strain>
    </source>
</reference>
<keyword id="KW-0378">Hydrolase</keyword>
<keyword id="KW-0479">Metal-binding</keyword>
<name>RPPH_VARPS</name>
<sequence>MLDRDGFRPNVGIILLNQRNQVFWGKRIRTHSWQFPQGGIDRGESPEQAMFRELHEEVGLHPEHVRIVARTRDWLRYEVPDRFIRRDARGHYKGQKQIWYLLQLIGHDWDLNLRATDHPEFDAWRWHDYWVPLDVVVEFKRGVYEMALTELARYLPRQDFRNRFLRSNVRAREFERHMPDGGAPAGLDLPPGGSFDPHPDITSASDDPSPPPHNKAPFLPSQR</sequence>
<evidence type="ECO:0000255" key="1">
    <source>
        <dbReference type="HAMAP-Rule" id="MF_00298"/>
    </source>
</evidence>
<evidence type="ECO:0000256" key="2">
    <source>
        <dbReference type="SAM" id="MobiDB-lite"/>
    </source>
</evidence>